<accession>A0A075B6H8</accession>
<feature type="signal peptide" evidence="2">
    <location>
        <begin position="1"/>
        <end position="22"/>
    </location>
</feature>
<feature type="chain" id="PRO_5008197242" description="Probable non-functional immunoglobulin kappa variable 1D-42" evidence="2">
    <location>
        <begin position="23"/>
        <end position="117"/>
    </location>
</feature>
<feature type="domain" description="Ig-like" evidence="3">
    <location>
        <begin position="23"/>
        <end position="117" status="greater than"/>
    </location>
</feature>
<feature type="region of interest" description="Framework-1" evidence="1">
    <location>
        <begin position="23"/>
        <end position="45"/>
    </location>
</feature>
<feature type="region of interest" description="Complementarity-determining-1" evidence="1">
    <location>
        <begin position="46"/>
        <end position="56"/>
    </location>
</feature>
<feature type="region of interest" description="Framework-2" evidence="1">
    <location>
        <begin position="57"/>
        <end position="71"/>
    </location>
</feature>
<feature type="region of interest" description="Complementarity-determining-2" evidence="1">
    <location>
        <begin position="72"/>
        <end position="78"/>
    </location>
</feature>
<feature type="region of interest" description="Framework-3" evidence="1">
    <location>
        <begin position="79"/>
        <end position="110"/>
    </location>
</feature>
<feature type="region of interest" description="Complementarity-determining-3" evidence="1">
    <location>
        <begin position="111"/>
        <end position="117" status="greater than"/>
    </location>
</feature>
<feature type="disulfide bond" evidence="3">
    <location>
        <begin position="45"/>
        <end position="110"/>
    </location>
</feature>
<feature type="non-terminal residue">
    <location>
        <position position="117"/>
    </location>
</feature>
<keyword id="KW-1064">Adaptive immunity</keyword>
<keyword id="KW-1003">Cell membrane</keyword>
<keyword id="KW-1015">Disulfide bond</keyword>
<keyword id="KW-0391">Immunity</keyword>
<keyword id="KW-1280">Immunoglobulin</keyword>
<keyword id="KW-0393">Immunoglobulin domain</keyword>
<keyword id="KW-0472">Membrane</keyword>
<keyword id="KW-1267">Proteomics identification</keyword>
<keyword id="KW-1185">Reference proteome</keyword>
<keyword id="KW-0964">Secreted</keyword>
<keyword id="KW-0732">Signal</keyword>
<evidence type="ECO:0000250" key="1">
    <source>
        <dbReference type="UniProtKB" id="P01602"/>
    </source>
</evidence>
<evidence type="ECO:0000255" key="2"/>
<evidence type="ECO:0000255" key="3">
    <source>
        <dbReference type="PROSITE-ProRule" id="PRU00114"/>
    </source>
</evidence>
<evidence type="ECO:0000303" key="4">
    <source>
    </source>
</evidence>
<evidence type="ECO:0000303" key="5">
    <source>
    </source>
</evidence>
<evidence type="ECO:0000303" key="6">
    <source>
    </source>
</evidence>
<evidence type="ECO:0000303" key="7">
    <source>
    </source>
</evidence>
<evidence type="ECO:0000303" key="8">
    <source>
    </source>
</evidence>
<evidence type="ECO:0000303" key="9">
    <source>
    </source>
</evidence>
<evidence type="ECO:0000303" key="10">
    <source ref="4"/>
</evidence>
<evidence type="ECO:0000305" key="11"/>
<evidence type="ECO:0000312" key="12">
    <source>
        <dbReference type="HGNC" id="HGNC:5757"/>
    </source>
</evidence>
<protein>
    <recommendedName>
        <fullName evidence="11">Probable non-functional immunoglobulin kappa variable 1D-42</fullName>
    </recommendedName>
</protein>
<name>KVD42_HUMAN</name>
<proteinExistence type="evidence at protein level"/>
<sequence length="117" mass="13014">MDMRVPAQLLGLLLLWLPGVRFDIQMTQSPSFLSASVGDRVSIICWASEGISSNLAWYLQKPGKSPKLFLYDAKDLHPGVSSRFSGRGSGTDFTLTIISLKPEDFAAYYCKQDFSYP</sequence>
<reference key="1">
    <citation type="journal article" date="2005" name="Nature">
        <title>Generation and annotation of the DNA sequences of human chromosomes 2 and 4.</title>
        <authorList>
            <person name="Hillier L.W."/>
            <person name="Graves T.A."/>
            <person name="Fulton R.S."/>
            <person name="Fulton L.A."/>
            <person name="Pepin K.H."/>
            <person name="Minx P."/>
            <person name="Wagner-McPherson C."/>
            <person name="Layman D."/>
            <person name="Wylie K."/>
            <person name="Sekhon M."/>
            <person name="Becker M.C."/>
            <person name="Fewell G.A."/>
            <person name="Delehaunty K.D."/>
            <person name="Miner T.L."/>
            <person name="Nash W.E."/>
            <person name="Kremitzki C."/>
            <person name="Oddy L."/>
            <person name="Du H."/>
            <person name="Sun H."/>
            <person name="Bradshaw-Cordum H."/>
            <person name="Ali J."/>
            <person name="Carter J."/>
            <person name="Cordes M."/>
            <person name="Harris A."/>
            <person name="Isak A."/>
            <person name="van Brunt A."/>
            <person name="Nguyen C."/>
            <person name="Du F."/>
            <person name="Courtney L."/>
            <person name="Kalicki J."/>
            <person name="Ozersky P."/>
            <person name="Abbott S."/>
            <person name="Armstrong J."/>
            <person name="Belter E.A."/>
            <person name="Caruso L."/>
            <person name="Cedroni M."/>
            <person name="Cotton M."/>
            <person name="Davidson T."/>
            <person name="Desai A."/>
            <person name="Elliott G."/>
            <person name="Erb T."/>
            <person name="Fronick C."/>
            <person name="Gaige T."/>
            <person name="Haakenson W."/>
            <person name="Haglund K."/>
            <person name="Holmes A."/>
            <person name="Harkins R."/>
            <person name="Kim K."/>
            <person name="Kruchowski S.S."/>
            <person name="Strong C.M."/>
            <person name="Grewal N."/>
            <person name="Goyea E."/>
            <person name="Hou S."/>
            <person name="Levy A."/>
            <person name="Martinka S."/>
            <person name="Mead K."/>
            <person name="McLellan M.D."/>
            <person name="Meyer R."/>
            <person name="Randall-Maher J."/>
            <person name="Tomlinson C."/>
            <person name="Dauphin-Kohlberg S."/>
            <person name="Kozlowicz-Reilly A."/>
            <person name="Shah N."/>
            <person name="Swearengen-Shahid S."/>
            <person name="Snider J."/>
            <person name="Strong J.T."/>
            <person name="Thompson J."/>
            <person name="Yoakum M."/>
            <person name="Leonard S."/>
            <person name="Pearman C."/>
            <person name="Trani L."/>
            <person name="Radionenko M."/>
            <person name="Waligorski J.E."/>
            <person name="Wang C."/>
            <person name="Rock S.M."/>
            <person name="Tin-Wollam A.-M."/>
            <person name="Maupin R."/>
            <person name="Latreille P."/>
            <person name="Wendl M.C."/>
            <person name="Yang S.-P."/>
            <person name="Pohl C."/>
            <person name="Wallis J.W."/>
            <person name="Spieth J."/>
            <person name="Bieri T.A."/>
            <person name="Berkowicz N."/>
            <person name="Nelson J.O."/>
            <person name="Osborne J."/>
            <person name="Ding L."/>
            <person name="Meyer R."/>
            <person name="Sabo A."/>
            <person name="Shotland Y."/>
            <person name="Sinha P."/>
            <person name="Wohldmann P.E."/>
            <person name="Cook L.L."/>
            <person name="Hickenbotham M.T."/>
            <person name="Eldred J."/>
            <person name="Williams D."/>
            <person name="Jones T.A."/>
            <person name="She X."/>
            <person name="Ciccarelli F.D."/>
            <person name="Izaurralde E."/>
            <person name="Taylor J."/>
            <person name="Schmutz J."/>
            <person name="Myers R.M."/>
            <person name="Cox D.R."/>
            <person name="Huang X."/>
            <person name="McPherson J.D."/>
            <person name="Mardis E.R."/>
            <person name="Clifton S.W."/>
            <person name="Warren W.C."/>
            <person name="Chinwalla A.T."/>
            <person name="Eddy S.R."/>
            <person name="Marra M.A."/>
            <person name="Ovcharenko I."/>
            <person name="Furey T.S."/>
            <person name="Miller W."/>
            <person name="Eichler E.E."/>
            <person name="Bork P."/>
            <person name="Suyama M."/>
            <person name="Torrents D."/>
            <person name="Waterston R.H."/>
            <person name="Wilson R.K."/>
        </authorList>
    </citation>
    <scope>NUCLEOTIDE SEQUENCE [LARGE SCALE GENOMIC DNA] (IMGT ALLELE IGKV1D-42*02)</scope>
</reference>
<reference key="2">
    <citation type="journal article" date="1998" name="Exp. Clin. Immunogenet.">
        <title>IMGT (ImMunoGeneTics) locus on focus. A new section of Experimental and Clinical Immunogenetics.</title>
        <authorList>
            <person name="Lefranc M.P."/>
        </authorList>
    </citation>
    <scope>CHARACTERIZATION</scope>
</reference>
<reference key="3">
    <citation type="journal article" date="2001" name="Exp. Clin. Immunogenet.">
        <title>Nomenclature of the human immunoglobulin heavy (IGH) genes.</title>
        <authorList>
            <person name="Lefranc M.P."/>
        </authorList>
    </citation>
    <scope>NOMENCLATURE</scope>
</reference>
<reference key="4">
    <citation type="book" date="2001" name="The Immunoglobulin FactsBook.">
        <title>The Immunoglobulin FactsBook.</title>
        <editorList>
            <person name="Lefranc M.P."/>
            <person name="Lefranc G."/>
        </editorList>
        <authorList>
            <person name="Lefranc M.P."/>
            <person name="Lefranc G."/>
        </authorList>
    </citation>
    <scope>NOMENCLATURE</scope>
</reference>
<reference key="5">
    <citation type="journal article" date="2007" name="Annu. Rev. Genet.">
        <title>Immunoglobulin somatic hypermutation.</title>
        <authorList>
            <person name="Teng G."/>
            <person name="Papavasiliou F.N."/>
        </authorList>
    </citation>
    <scope>REVIEW ON SOMATIC HYPERMUTATION</scope>
</reference>
<reference key="6">
    <citation type="journal article" date="2010" name="J. Allergy Clin. Immunol.">
        <title>Structure and function of immunoglobulins.</title>
        <authorList>
            <person name="Schroeder H.W. Jr."/>
            <person name="Cavacini L."/>
        </authorList>
    </citation>
    <scope>REVIEW ON IMMUNOGLOBULINS</scope>
</reference>
<reference key="7">
    <citation type="journal article" date="2012" name="Nat. Rev. Immunol.">
        <title>Molecular programming of B cell memory.</title>
        <authorList>
            <person name="McHeyzer-Williams M."/>
            <person name="Okitsu S."/>
            <person name="Wang N."/>
            <person name="McHeyzer-Williams L."/>
        </authorList>
    </citation>
    <scope>REVIEW ON FUNCTION</scope>
</reference>
<reference key="8">
    <citation type="journal article" date="2014" name="Front. Immunol.">
        <title>Immunoglobulin and T Cell Receptor Genes: IMGT((R)) and the Birth and Rise of Immunoinformatics.</title>
        <authorList>
            <person name="Lefranc M.P."/>
        </authorList>
    </citation>
    <scope>NOMENCLATURE</scope>
</reference>
<organism>
    <name type="scientific">Homo sapiens</name>
    <name type="common">Human</name>
    <dbReference type="NCBI Taxonomy" id="9606"/>
    <lineage>
        <taxon>Eukaryota</taxon>
        <taxon>Metazoa</taxon>
        <taxon>Chordata</taxon>
        <taxon>Craniata</taxon>
        <taxon>Vertebrata</taxon>
        <taxon>Euteleostomi</taxon>
        <taxon>Mammalia</taxon>
        <taxon>Eutheria</taxon>
        <taxon>Euarchontoglires</taxon>
        <taxon>Primates</taxon>
        <taxon>Haplorrhini</taxon>
        <taxon>Catarrhini</taxon>
        <taxon>Hominidae</taxon>
        <taxon>Homo</taxon>
    </lineage>
</organism>
<gene>
    <name evidence="4 10 12" type="primary">IGKV1D-42</name>
</gene>
<dbReference type="EMBL" id="AC243981">
    <property type="status" value="NOT_ANNOTATED_CDS"/>
    <property type="molecule type" value="Genomic_DNA"/>
</dbReference>
<dbReference type="SMR" id="A0A075B6H8"/>
<dbReference type="FunCoup" id="A0A075B6H8">
    <property type="interactions" value="263"/>
</dbReference>
<dbReference type="BioMuta" id="IGKV1D-42"/>
<dbReference type="MassIVE" id="A0A075B6H8"/>
<dbReference type="Ensembl" id="ENST00000390278.3">
    <property type="protein sequence ID" value="ENSP00000374813.3"/>
    <property type="gene ID" value="ENSG00000211633.3"/>
</dbReference>
<dbReference type="UCSC" id="uc061lsc.1">
    <property type="organism name" value="human"/>
</dbReference>
<dbReference type="AGR" id="HGNC:5757"/>
<dbReference type="GeneCards" id="IGKV1D-42"/>
<dbReference type="HGNC" id="HGNC:5757">
    <property type="gene designation" value="IGKV1D-42"/>
</dbReference>
<dbReference type="HPA" id="ENSG00000211633">
    <property type="expression patterns" value="Tissue enhanced (intestine, lymphoid tissue)"/>
</dbReference>
<dbReference type="neXtProt" id="NX_A0A075B6H8"/>
<dbReference type="OpenTargets" id="ENSG00000211633"/>
<dbReference type="VEuPathDB" id="HostDB:ENSG00000211633"/>
<dbReference type="GeneTree" id="ENSGT00940000153048"/>
<dbReference type="HOGENOM" id="CLU_077975_4_1_1"/>
<dbReference type="InParanoid" id="A0A075B6H8"/>
<dbReference type="OMA" id="RFDIQMT"/>
<dbReference type="OrthoDB" id="6370831at2759"/>
<dbReference type="PAN-GO" id="A0A075B6H8">
    <property type="GO annotations" value="3 GO annotations based on evolutionary models"/>
</dbReference>
<dbReference type="PRO" id="PR:A0A075B6H8"/>
<dbReference type="Proteomes" id="UP000005640">
    <property type="component" value="Chromosome 2"/>
</dbReference>
<dbReference type="RNAct" id="A0A075B6H8">
    <property type="molecule type" value="protein"/>
</dbReference>
<dbReference type="Bgee" id="ENSG00000211633">
    <property type="expression patterns" value="Expressed in rectum and 72 other cell types or tissues"/>
</dbReference>
<dbReference type="GO" id="GO:0005576">
    <property type="term" value="C:extracellular region"/>
    <property type="evidence" value="ECO:0007669"/>
    <property type="project" value="UniProtKB-SubCell"/>
</dbReference>
<dbReference type="GO" id="GO:0019814">
    <property type="term" value="C:immunoglobulin complex"/>
    <property type="evidence" value="ECO:0000318"/>
    <property type="project" value="GO_Central"/>
</dbReference>
<dbReference type="GO" id="GO:0005886">
    <property type="term" value="C:plasma membrane"/>
    <property type="evidence" value="ECO:0007669"/>
    <property type="project" value="UniProtKB-SubCell"/>
</dbReference>
<dbReference type="GO" id="GO:0002250">
    <property type="term" value="P:adaptive immune response"/>
    <property type="evidence" value="ECO:0007669"/>
    <property type="project" value="UniProtKB-KW"/>
</dbReference>
<dbReference type="GO" id="GO:0006955">
    <property type="term" value="P:immune response"/>
    <property type="evidence" value="ECO:0000318"/>
    <property type="project" value="GO_Central"/>
</dbReference>
<dbReference type="FunFam" id="2.60.40.10:FF:002526">
    <property type="entry name" value="Immunolglobulin kappa light chain variable region L22"/>
    <property type="match status" value="1"/>
</dbReference>
<dbReference type="Gene3D" id="2.60.40.10">
    <property type="entry name" value="Immunoglobulins"/>
    <property type="match status" value="1"/>
</dbReference>
<dbReference type="InterPro" id="IPR007110">
    <property type="entry name" value="Ig-like_dom"/>
</dbReference>
<dbReference type="InterPro" id="IPR036179">
    <property type="entry name" value="Ig-like_dom_sf"/>
</dbReference>
<dbReference type="InterPro" id="IPR013783">
    <property type="entry name" value="Ig-like_fold"/>
</dbReference>
<dbReference type="InterPro" id="IPR013106">
    <property type="entry name" value="Ig_V-set"/>
</dbReference>
<dbReference type="InterPro" id="IPR050150">
    <property type="entry name" value="IgV_Light_Chain"/>
</dbReference>
<dbReference type="PANTHER" id="PTHR23267">
    <property type="entry name" value="IMMUNOGLOBULIN LIGHT CHAIN"/>
    <property type="match status" value="1"/>
</dbReference>
<dbReference type="Pfam" id="PF07686">
    <property type="entry name" value="V-set"/>
    <property type="match status" value="1"/>
</dbReference>
<dbReference type="SMART" id="SM00406">
    <property type="entry name" value="IGv"/>
    <property type="match status" value="1"/>
</dbReference>
<dbReference type="SUPFAM" id="SSF48726">
    <property type="entry name" value="Immunoglobulin"/>
    <property type="match status" value="1"/>
</dbReference>
<dbReference type="PROSITE" id="PS50835">
    <property type="entry name" value="IG_LIKE"/>
    <property type="match status" value="1"/>
</dbReference>
<comment type="function">
    <text evidence="5 6 7 8 9">Probable non-functional open reading frame (ORF) of V region of the variable domain of immunoglobulin light chains (PubMed:24600447). Non-functional ORF generally cannot participate in the synthesis of a productive immunoglobulin chain due to altered V-(D)-J or switch recombination and/or splicing site (at mRNA level) and/or conserved amino acid change (protein level) (PubMed:9619395). Immunoglobulins, also known as antibodies, are membrane-bound or secreted glycoproteins produced by B lymphocytes. In the recognition phase of humoral immunity, the membrane-bound immunoglobulins serve as receptors which, upon binding of a specific antigen, trigger the clonal expansion and differentiation of B lymphocytes into immunoglobulins-secreting plasma cells. Secreted immunoglobulins mediate the effector phase of humoral immunity, which results in the elimination of bound antigens (PubMed:20176268, PubMed:22158414). The antigen binding site is formed by the variable domain of one heavy chain, together with that of its associated light chain. Thus, each immunoglobulin has two antigen binding sites with remarkable affinity for a particular antigen. The variable domains are assembled by a process called V-(D)-J rearrangement and can then be subjected to somatic hypermutations which, after exposure to antigen and selection, allow affinity maturation for a particular antigen (PubMed:17576170, PubMed:20176268).</text>
</comment>
<comment type="subunit">
    <text evidence="6">Immunoglobulins are composed of two identical heavy chains and two identical light chains; disulfide-linked.</text>
</comment>
<comment type="subcellular location">
    <subcellularLocation>
        <location evidence="6 7">Secreted</location>
    </subcellularLocation>
    <subcellularLocation>
        <location evidence="6 7">Cell membrane</location>
    </subcellularLocation>
</comment>
<comment type="polymorphism">
    <text evidence="11">There are several alleles. The sequence shown is that of IMGT allele IGKV1D-42*02.</text>
</comment>
<comment type="caution">
    <text evidence="9 11">Most probably a non-functional protein that cannot participate in the synthesis of a productive immunoglobulin chain due to an unusual recombination signal (RS) sequence altering V-(D)-J recombination (PubMed:9619395).</text>
</comment>